<gene>
    <name type="primary">rps12-A</name>
</gene>
<gene>
    <name type="primary">rps12-B</name>
</gene>
<accession>P12149</accession>
<protein>
    <recommendedName>
        <fullName evidence="2">Small ribosomal subunit protein uS12cz/uS12cy</fullName>
    </recommendedName>
    <alternativeName>
        <fullName evidence="3">30S ribosomal protein S12, chloroplastic</fullName>
    </alternativeName>
</protein>
<geneLocation type="chloroplast"/>
<reference key="1">
    <citation type="journal article" date="1989" name="Mol. Gen. Genet.">
        <title>The complete sequence of the rice (Oryza sativa) chloroplast genome: intermolecular recombination between distinct tRNA genes accounts for a major plastid DNA inversion during the evolution of the cereals.</title>
        <authorList>
            <person name="Hiratsuka J."/>
            <person name="Shimada H."/>
            <person name="Whittier R."/>
            <person name="Ishibashi T."/>
            <person name="Sakamoto M."/>
            <person name="Mori M."/>
            <person name="Kondo C."/>
            <person name="Honji Y."/>
            <person name="Sun C.-R."/>
            <person name="Meng B.-Y."/>
            <person name="Li Y.-Q."/>
            <person name="Kanno A."/>
            <person name="Nishizawa Y."/>
            <person name="Hirai A."/>
            <person name="Shinozaki K."/>
            <person name="Sugiura M."/>
        </authorList>
    </citation>
    <scope>NUCLEOTIDE SEQUENCE [LARGE SCALE GENOMIC DNA]</scope>
    <source>
        <strain>cv. Nipponbare</strain>
    </source>
</reference>
<reference key="2">
    <citation type="journal article" date="2004" name="Plant Physiol.">
        <title>A comparison of rice chloroplast genomes.</title>
        <authorList>
            <person name="Tang J."/>
            <person name="Xia H."/>
            <person name="Cao M."/>
            <person name="Zhang X."/>
            <person name="Zeng W."/>
            <person name="Hu S."/>
            <person name="Tong W."/>
            <person name="Wang J."/>
            <person name="Wang J."/>
            <person name="Yu J."/>
            <person name="Yang H."/>
            <person name="Zhu L."/>
        </authorList>
    </citation>
    <scope>NUCLEOTIDE SEQUENCE [LARGE SCALE GENOMIC DNA]</scope>
    <source>
        <strain>cv. Nipponbare</strain>
    </source>
</reference>
<feature type="chain" id="PRO_0000146415" description="Small ribosomal subunit protein uS12cz/uS12cy">
    <location>
        <begin position="1"/>
        <end position="124"/>
    </location>
</feature>
<name>RR12_ORYSJ</name>
<proteinExistence type="inferred from homology"/>
<sequence length="124" mass="13820">MPTVKQLIRNARQPIRNARKSAALKGCPQRRGTCARVYTINPKKPNSALRKVARVRLTSGFEITAYIPGIGHNLQEHSVVLVRGGRVKDLPGVRYRIIRGALDAVAVKNRQQGRSKYGVKKPKK</sequence>
<keyword id="KW-0150">Chloroplast</keyword>
<keyword id="KW-0934">Plastid</keyword>
<keyword id="KW-1185">Reference proteome</keyword>
<keyword id="KW-0687">Ribonucleoprotein</keyword>
<keyword id="KW-0689">Ribosomal protein</keyword>
<keyword id="KW-0694">RNA-binding</keyword>
<keyword id="KW-0699">rRNA-binding</keyword>
<dbReference type="EMBL" id="X15901">
    <property type="protein sequence ID" value="CAA33918.1"/>
    <property type="molecule type" value="Genomic_DNA"/>
</dbReference>
<dbReference type="EMBL" id="X15901">
    <property type="protein sequence ID" value="CAA33929.1"/>
    <property type="molecule type" value="Genomic_DNA"/>
</dbReference>
<dbReference type="EMBL" id="AY522330">
    <property type="status" value="NOT_ANNOTATED_CDS"/>
    <property type="molecule type" value="Genomic_DNA"/>
</dbReference>
<dbReference type="PIR" id="JQ0250">
    <property type="entry name" value="R3RZ12"/>
</dbReference>
<dbReference type="SMR" id="P12149"/>
<dbReference type="FunCoup" id="P12149">
    <property type="interactions" value="900"/>
</dbReference>
<dbReference type="STRING" id="39947.P12149"/>
<dbReference type="PaxDb" id="39947-P12149"/>
<dbReference type="KEGG" id="dosa:3rps12"/>
<dbReference type="KEGG" id="osa:3131385"/>
<dbReference type="KEGG" id="osa:3131499"/>
<dbReference type="InParanoid" id="P12149"/>
<dbReference type="OrthoDB" id="653404at2759"/>
<dbReference type="Proteomes" id="UP000059680">
    <property type="component" value="Chloroplast"/>
</dbReference>
<dbReference type="GO" id="GO:0009507">
    <property type="term" value="C:chloroplast"/>
    <property type="evidence" value="ECO:0007669"/>
    <property type="project" value="UniProtKB-SubCell"/>
</dbReference>
<dbReference type="GO" id="GO:0009536">
    <property type="term" value="C:plastid"/>
    <property type="evidence" value="ECO:0000250"/>
    <property type="project" value="Gramene"/>
</dbReference>
<dbReference type="GO" id="GO:0005840">
    <property type="term" value="C:ribosome"/>
    <property type="evidence" value="ECO:0000318"/>
    <property type="project" value="GO_Central"/>
</dbReference>
<dbReference type="GO" id="GO:0015935">
    <property type="term" value="C:small ribosomal subunit"/>
    <property type="evidence" value="ECO:0007669"/>
    <property type="project" value="InterPro"/>
</dbReference>
<dbReference type="GO" id="GO:0019843">
    <property type="term" value="F:rRNA binding"/>
    <property type="evidence" value="ECO:0007669"/>
    <property type="project" value="UniProtKB-UniRule"/>
</dbReference>
<dbReference type="GO" id="GO:0003735">
    <property type="term" value="F:structural constituent of ribosome"/>
    <property type="evidence" value="ECO:0000318"/>
    <property type="project" value="GO_Central"/>
</dbReference>
<dbReference type="GO" id="GO:0006412">
    <property type="term" value="P:translation"/>
    <property type="evidence" value="ECO:0000318"/>
    <property type="project" value="GO_Central"/>
</dbReference>
<dbReference type="CDD" id="cd03368">
    <property type="entry name" value="Ribosomal_S12"/>
    <property type="match status" value="1"/>
</dbReference>
<dbReference type="FunFam" id="2.40.50.140:FF:000008">
    <property type="entry name" value="30S ribosomal protein S12, chloroplastic"/>
    <property type="match status" value="1"/>
</dbReference>
<dbReference type="Gene3D" id="2.40.50.140">
    <property type="entry name" value="Nucleic acid-binding proteins"/>
    <property type="match status" value="1"/>
</dbReference>
<dbReference type="HAMAP" id="MF_00403_B">
    <property type="entry name" value="Ribosomal_uS12_B"/>
    <property type="match status" value="1"/>
</dbReference>
<dbReference type="InterPro" id="IPR012340">
    <property type="entry name" value="NA-bd_OB-fold"/>
</dbReference>
<dbReference type="InterPro" id="IPR006032">
    <property type="entry name" value="Ribosomal_uS12"/>
</dbReference>
<dbReference type="InterPro" id="IPR005679">
    <property type="entry name" value="Ribosomal_uS12_bac"/>
</dbReference>
<dbReference type="NCBIfam" id="TIGR00981">
    <property type="entry name" value="rpsL_bact"/>
    <property type="match status" value="1"/>
</dbReference>
<dbReference type="PANTHER" id="PTHR11652">
    <property type="entry name" value="30S RIBOSOMAL PROTEIN S12 FAMILY MEMBER"/>
    <property type="match status" value="1"/>
</dbReference>
<dbReference type="Pfam" id="PF00164">
    <property type="entry name" value="Ribosom_S12_S23"/>
    <property type="match status" value="1"/>
</dbReference>
<dbReference type="PIRSF" id="PIRSF002133">
    <property type="entry name" value="Ribosomal_S12/S23"/>
    <property type="match status" value="1"/>
</dbReference>
<dbReference type="PRINTS" id="PR01034">
    <property type="entry name" value="RIBOSOMALS12"/>
</dbReference>
<dbReference type="SUPFAM" id="SSF50249">
    <property type="entry name" value="Nucleic acid-binding proteins"/>
    <property type="match status" value="1"/>
</dbReference>
<dbReference type="PROSITE" id="PS00055">
    <property type="entry name" value="RIBOSOMAL_S12"/>
    <property type="match status" value="1"/>
</dbReference>
<organism>
    <name type="scientific">Oryza sativa subsp. japonica</name>
    <name type="common">Rice</name>
    <dbReference type="NCBI Taxonomy" id="39947"/>
    <lineage>
        <taxon>Eukaryota</taxon>
        <taxon>Viridiplantae</taxon>
        <taxon>Streptophyta</taxon>
        <taxon>Embryophyta</taxon>
        <taxon>Tracheophyta</taxon>
        <taxon>Spermatophyta</taxon>
        <taxon>Magnoliopsida</taxon>
        <taxon>Liliopsida</taxon>
        <taxon>Poales</taxon>
        <taxon>Poaceae</taxon>
        <taxon>BOP clade</taxon>
        <taxon>Oryzoideae</taxon>
        <taxon>Oryzeae</taxon>
        <taxon>Oryzinae</taxon>
        <taxon>Oryza</taxon>
        <taxon>Oryza sativa</taxon>
    </lineage>
</organism>
<evidence type="ECO:0000250" key="1"/>
<evidence type="ECO:0000255" key="2">
    <source>
        <dbReference type="HAMAP-Rule" id="MF_00403"/>
    </source>
</evidence>
<evidence type="ECO:0000305" key="3"/>
<comment type="function">
    <text evidence="1">With S4 and S5 plays an important role in translational accuracy. Located at the interface of the 30S and 50S subunits (By similarity).</text>
</comment>
<comment type="subunit">
    <text evidence="1">Part of the 30S ribosomal subunit.</text>
</comment>
<comment type="subcellular location">
    <subcellularLocation>
        <location>Plastid</location>
        <location>Chloroplast</location>
    </subcellularLocation>
</comment>
<comment type="similarity">
    <text evidence="3">Belongs to the universal ribosomal protein uS12 family.</text>
</comment>